<comment type="function">
    <text evidence="1">Packages the positive strand viral genome RNA into a helical ribonucleocapsid (RNP) and plays a fundamental role during virion assembly through its interactions with the viral genome and membrane protein M. Plays an important role in enhancing the efficiency of subgenomic viral RNA transcription as well as viral replication.</text>
</comment>
<comment type="subunit">
    <text evidence="1">Homooligomer. Both monomeric and oligomeric forms interact with RNA. Interacts with protein M. Interacts with NSP3; this interaction serves to tether the genome to the newly translated replicase-transcriptase complex at a very early stage of infection.</text>
</comment>
<comment type="subcellular location">
    <subcellularLocation>
        <location evidence="1">Virion</location>
    </subcellularLocation>
    <subcellularLocation>
        <location evidence="1">Host endoplasmic reticulum-Golgi intermediate compartment</location>
    </subcellularLocation>
    <subcellularLocation>
        <location evidence="1">Host Golgi apparatus</location>
    </subcellularLocation>
    <text evidence="1">Located inside the virion, complexed with the viral RNA. Probably associates with ER-derived membranes where it participates in viral RNA synthesis and virus budding.</text>
</comment>
<comment type="PTM">
    <text evidence="1">ADP-ribosylated. The ADP-ribosylation is retained in the virion during infection.</text>
</comment>
<comment type="PTM">
    <text evidence="1">Phosphorylated on serine and threonine residues.</text>
</comment>
<comment type="similarity">
    <text evidence="1">Belongs to the gammacoronavirus nucleocapsid protein family.</text>
</comment>
<sequence length="409" mass="45116">MASGKATGKTDAPAPVIKLGGPRPPKVGSSGNASWFQAIKAKKLNSPQPKFEGSGVPDNENLKTSQQHGYWRRQARFKPGKGGRKPVPDAWYFYYTGTGPAADLNWGDSQDGIVWVAAKGADVKSRSNQGTRDPDKFDQYPLRFSDGGPDGNFRWDFIPLNRGRSGRSTAASSAASSRPPSREGSRGRRSGSEDDLIARAAKIIQDQQKKGSRITKAKADEMAHRRYCKRTIPPGYKVDQVFGPRTKGKEGNFGDDKMNEEGIKDGRVTAMLNLVPSSHACLFGSRVTPKLQPDGLHLKFEFTTVVPRDDPQFDNYVKICDQCVDGVGTRPKDDEPKPKSRSSSRPATRTSSPAPRQQRLKKEKRPKKQDDEVDKALTSDEERNNAQLEFDDEPKVINWGDSALGENEL</sequence>
<dbReference type="EMBL" id="AY121092">
    <property type="protein sequence ID" value="AAM82281.1"/>
    <property type="molecule type" value="mRNA"/>
</dbReference>
<dbReference type="EMBL" id="AY167730">
    <property type="protein sequence ID" value="AAO46049.1"/>
    <property type="molecule type" value="mRNA"/>
</dbReference>
<dbReference type="SMR" id="Q8JMI6"/>
<dbReference type="GO" id="GO:0044172">
    <property type="term" value="C:host cell endoplasmic reticulum-Golgi intermediate compartment"/>
    <property type="evidence" value="ECO:0007669"/>
    <property type="project" value="UniProtKB-SubCell"/>
</dbReference>
<dbReference type="GO" id="GO:0044177">
    <property type="term" value="C:host cell Golgi apparatus"/>
    <property type="evidence" value="ECO:0007669"/>
    <property type="project" value="UniProtKB-SubCell"/>
</dbReference>
<dbReference type="GO" id="GO:1990904">
    <property type="term" value="C:ribonucleoprotein complex"/>
    <property type="evidence" value="ECO:0007669"/>
    <property type="project" value="UniProtKB-KW"/>
</dbReference>
<dbReference type="GO" id="GO:0019013">
    <property type="term" value="C:viral nucleocapsid"/>
    <property type="evidence" value="ECO:0007669"/>
    <property type="project" value="UniProtKB-UniRule"/>
</dbReference>
<dbReference type="GO" id="GO:0003723">
    <property type="term" value="F:RNA binding"/>
    <property type="evidence" value="ECO:0007669"/>
    <property type="project" value="UniProtKB-UniRule"/>
</dbReference>
<dbReference type="CDD" id="cd21595">
    <property type="entry name" value="CoV_N-CTD"/>
    <property type="match status" value="1"/>
</dbReference>
<dbReference type="CDD" id="cd21554">
    <property type="entry name" value="CoV_N-NTD"/>
    <property type="match status" value="1"/>
</dbReference>
<dbReference type="HAMAP" id="MF_04097">
    <property type="entry name" value="GAMMA_CORONA_NCAP"/>
    <property type="match status" value="1"/>
</dbReference>
<dbReference type="InterPro" id="IPR044344">
    <property type="entry name" value="N_prot_C_CoV"/>
</dbReference>
<dbReference type="InterPro" id="IPR044345">
    <property type="entry name" value="N_prot_N_CoV"/>
</dbReference>
<dbReference type="InterPro" id="IPR042547">
    <property type="entry name" value="NCAP_gCoV"/>
</dbReference>
<dbReference type="InterPro" id="IPR001218">
    <property type="entry name" value="Nucleocap_CoV"/>
</dbReference>
<dbReference type="InterPro" id="IPR037179">
    <property type="entry name" value="Nucleocapsid_C"/>
</dbReference>
<dbReference type="InterPro" id="IPR037195">
    <property type="entry name" value="Nucleocapsid_N"/>
</dbReference>
<dbReference type="Pfam" id="PF00937">
    <property type="entry name" value="CoV_nucleocap"/>
    <property type="match status" value="1"/>
</dbReference>
<dbReference type="PIRSF" id="PIRSF003888">
    <property type="entry name" value="Corona_nucleocap"/>
    <property type="match status" value="1"/>
</dbReference>
<dbReference type="SUPFAM" id="SSF110304">
    <property type="entry name" value="Coronavirus RNA-binding domain"/>
    <property type="match status" value="1"/>
</dbReference>
<dbReference type="SUPFAM" id="SSF103068">
    <property type="entry name" value="Nucleocapsid protein dimerization domain"/>
    <property type="match status" value="1"/>
</dbReference>
<dbReference type="PROSITE" id="PS51929">
    <property type="entry name" value="COV_N_CTD"/>
    <property type="match status" value="1"/>
</dbReference>
<dbReference type="PROSITE" id="PS51928">
    <property type="entry name" value="COV_N_NTD"/>
    <property type="match status" value="1"/>
</dbReference>
<evidence type="ECO:0000255" key="1">
    <source>
        <dbReference type="HAMAP-Rule" id="MF_04097"/>
    </source>
</evidence>
<evidence type="ECO:0000255" key="2">
    <source>
        <dbReference type="PROSITE-ProRule" id="PRU01276"/>
    </source>
</evidence>
<evidence type="ECO:0000255" key="3">
    <source>
        <dbReference type="PROSITE-ProRule" id="PRU01277"/>
    </source>
</evidence>
<evidence type="ECO:0000256" key="4">
    <source>
        <dbReference type="SAM" id="MobiDB-lite"/>
    </source>
</evidence>
<reference key="1">
    <citation type="submission" date="2002-06" db="EMBL/GenBank/DDBJ databases">
        <title>Sequence analysis of the N nucleocapsid protein gene of infectious bronchitis virus strains in Sichuan, China.</title>
        <authorList>
            <person name="Hongning W."/>
            <person name="Sheng Z."/>
            <person name="Chun L."/>
        </authorList>
    </citation>
    <scope>NUCLEOTIDE SEQUENCE [MRNA]</scope>
</reference>
<feature type="chain" id="PRO_0000105986" description="Nucleoprotein">
    <location>
        <begin position="1"/>
        <end position="409"/>
    </location>
</feature>
<feature type="domain" description="CoV N NTD" evidence="2">
    <location>
        <begin position="31"/>
        <end position="156"/>
    </location>
</feature>
<feature type="domain" description="CoV N CTD" evidence="3">
    <location>
        <begin position="215"/>
        <end position="331"/>
    </location>
</feature>
<feature type="region of interest" description="Disordered" evidence="4">
    <location>
        <begin position="1"/>
        <end position="32"/>
    </location>
</feature>
<feature type="region of interest" description="RNA-binding" evidence="1">
    <location>
        <begin position="29"/>
        <end position="160"/>
    </location>
</feature>
<feature type="region of interest" description="Disordered" evidence="4">
    <location>
        <begin position="44"/>
        <end position="69"/>
    </location>
</feature>
<feature type="region of interest" description="Disordered" evidence="4">
    <location>
        <begin position="121"/>
        <end position="194"/>
    </location>
</feature>
<feature type="region of interest" description="Dimerization" evidence="1">
    <location>
        <begin position="226"/>
        <end position="333"/>
    </location>
</feature>
<feature type="region of interest" description="Disordered" evidence="4">
    <location>
        <begin position="238"/>
        <end position="259"/>
    </location>
</feature>
<feature type="region of interest" description="Disordered" evidence="4">
    <location>
        <begin position="326"/>
        <end position="409"/>
    </location>
</feature>
<feature type="compositionally biased region" description="Low complexity" evidence="4">
    <location>
        <begin position="162"/>
        <end position="179"/>
    </location>
</feature>
<feature type="compositionally biased region" description="Basic and acidic residues" evidence="4">
    <location>
        <begin position="180"/>
        <end position="192"/>
    </location>
</feature>
<feature type="compositionally biased region" description="Basic and acidic residues" evidence="4">
    <location>
        <begin position="247"/>
        <end position="259"/>
    </location>
</feature>
<feature type="compositionally biased region" description="Low complexity" evidence="4">
    <location>
        <begin position="341"/>
        <end position="356"/>
    </location>
</feature>
<feature type="compositionally biased region" description="Basic residues" evidence="4">
    <location>
        <begin position="358"/>
        <end position="367"/>
    </location>
</feature>
<feature type="compositionally biased region" description="Basic and acidic residues" evidence="4">
    <location>
        <begin position="368"/>
        <end position="384"/>
    </location>
</feature>
<feature type="modified residue" description="Phosphoserine; by host" evidence="1">
    <location>
        <position position="190"/>
    </location>
</feature>
<feature type="modified residue" description="Phosphoserine; by host" evidence="1">
    <location>
        <position position="192"/>
    </location>
</feature>
<feature type="modified residue" description="Phosphothreonine; by host" evidence="1">
    <location>
        <position position="378"/>
    </location>
</feature>
<feature type="modified residue" description="Phosphoserine; by host" evidence="1">
    <location>
        <position position="379"/>
    </location>
</feature>
<feature type="disulfide bond" evidence="1">
    <location>
        <begin position="320"/>
        <end position="323"/>
    </location>
</feature>
<organismHost>
    <name type="scientific">Gallus gallus</name>
    <name type="common">Chicken</name>
    <dbReference type="NCBI Taxonomy" id="9031"/>
</organismHost>
<name>NCAP_IBVSA</name>
<proteinExistence type="evidence at transcript level"/>
<protein>
    <recommendedName>
        <fullName evidence="1">Nucleoprotein</fullName>
    </recommendedName>
    <alternativeName>
        <fullName evidence="1">Nucleocapsid protein</fullName>
        <shortName evidence="1">NC</shortName>
        <shortName evidence="1">Protein N</shortName>
    </alternativeName>
</protein>
<accession>Q8JMI6</accession>
<keyword id="KW-0013">ADP-ribosylation</keyword>
<keyword id="KW-1015">Disulfide bond</keyword>
<keyword id="KW-1040">Host Golgi apparatus</keyword>
<keyword id="KW-0597">Phosphoprotein</keyword>
<keyword id="KW-0687">Ribonucleoprotein</keyword>
<keyword id="KW-0694">RNA-binding</keyword>
<keyword id="KW-0804">Transcription</keyword>
<keyword id="KW-0805">Transcription regulation</keyword>
<keyword id="KW-0543">Viral nucleoprotein</keyword>
<keyword id="KW-0946">Virion</keyword>
<organism>
    <name type="scientific">Avian infectious bronchitis virus (strain SAIB20)</name>
    <name type="common">IBV</name>
    <dbReference type="NCBI Taxonomy" id="231426"/>
    <lineage>
        <taxon>Viruses</taxon>
        <taxon>Riboviria</taxon>
        <taxon>Orthornavirae</taxon>
        <taxon>Pisuviricota</taxon>
        <taxon>Pisoniviricetes</taxon>
        <taxon>Nidovirales</taxon>
        <taxon>Cornidovirineae</taxon>
        <taxon>Coronaviridae</taxon>
        <taxon>Orthocoronavirinae</taxon>
        <taxon>Gammacoronavirus</taxon>
        <taxon>Igacovirus</taxon>
        <taxon>Avian coronavirus</taxon>
    </lineage>
</organism>
<gene>
    <name evidence="1" type="primary">N</name>
    <name type="ORF">6</name>
</gene>